<reference key="1">
    <citation type="submission" date="2006-05" db="EMBL/GenBank/DDBJ databases">
        <authorList>
            <consortium name="Genoscope"/>
        </authorList>
    </citation>
    <scope>NUCLEOTIDE SEQUENCE [LARGE SCALE GENOMIC DNA]</scope>
    <source>
        <strain>WH7803</strain>
    </source>
</reference>
<feature type="chain" id="PRO_0000332093" description="Chaperonin GroEL 2">
    <location>
        <begin position="1"/>
        <end position="544"/>
    </location>
</feature>
<feature type="binding site" evidence="1">
    <location>
        <begin position="29"/>
        <end position="32"/>
    </location>
    <ligand>
        <name>ATP</name>
        <dbReference type="ChEBI" id="CHEBI:30616"/>
    </ligand>
</feature>
<feature type="binding site" evidence="1">
    <location>
        <begin position="86"/>
        <end position="90"/>
    </location>
    <ligand>
        <name>ATP</name>
        <dbReference type="ChEBI" id="CHEBI:30616"/>
    </ligand>
</feature>
<feature type="binding site" evidence="1">
    <location>
        <position position="413"/>
    </location>
    <ligand>
        <name>ATP</name>
        <dbReference type="ChEBI" id="CHEBI:30616"/>
    </ligand>
</feature>
<feature type="binding site" evidence="1">
    <location>
        <begin position="479"/>
        <end position="481"/>
    </location>
    <ligand>
        <name>ATP</name>
        <dbReference type="ChEBI" id="CHEBI:30616"/>
    </ligand>
</feature>
<feature type="binding site" evidence="1">
    <location>
        <position position="495"/>
    </location>
    <ligand>
        <name>ATP</name>
        <dbReference type="ChEBI" id="CHEBI:30616"/>
    </ligand>
</feature>
<organism>
    <name type="scientific">Synechococcus sp. (strain WH7803)</name>
    <dbReference type="NCBI Taxonomy" id="32051"/>
    <lineage>
        <taxon>Bacteria</taxon>
        <taxon>Bacillati</taxon>
        <taxon>Cyanobacteriota</taxon>
        <taxon>Cyanophyceae</taxon>
        <taxon>Synechococcales</taxon>
        <taxon>Synechococcaceae</taxon>
        <taxon>Synechococcus</taxon>
    </lineage>
</organism>
<protein>
    <recommendedName>
        <fullName evidence="1">Chaperonin GroEL 2</fullName>
        <ecNumber evidence="1">5.6.1.7</ecNumber>
    </recommendedName>
    <alternativeName>
        <fullName evidence="1">60 kDa chaperonin 2</fullName>
    </alternativeName>
    <alternativeName>
        <fullName evidence="1">Chaperonin-60 2</fullName>
        <shortName evidence="1">Cpn60 2</shortName>
    </alternativeName>
</protein>
<evidence type="ECO:0000255" key="1">
    <source>
        <dbReference type="HAMAP-Rule" id="MF_00600"/>
    </source>
</evidence>
<keyword id="KW-0067">ATP-binding</keyword>
<keyword id="KW-0143">Chaperone</keyword>
<keyword id="KW-0963">Cytoplasm</keyword>
<keyword id="KW-0413">Isomerase</keyword>
<keyword id="KW-0547">Nucleotide-binding</keyword>
<keyword id="KW-1185">Reference proteome</keyword>
<name>CH602_SYNPW</name>
<gene>
    <name evidence="1" type="primary">groEL2</name>
    <name evidence="1" type="synonym">groL2</name>
    <name type="ordered locus">SynWH7803_1998</name>
</gene>
<dbReference type="EC" id="5.6.1.7" evidence="1"/>
<dbReference type="EMBL" id="CT971583">
    <property type="protein sequence ID" value="CAK24424.1"/>
    <property type="molecule type" value="Genomic_DNA"/>
</dbReference>
<dbReference type="SMR" id="A5GNA9"/>
<dbReference type="STRING" id="32051.SynWH7803_1998"/>
<dbReference type="KEGG" id="syx:SynWH7803_1998"/>
<dbReference type="eggNOG" id="COG0459">
    <property type="taxonomic scope" value="Bacteria"/>
</dbReference>
<dbReference type="HOGENOM" id="CLU_016503_3_0_3"/>
<dbReference type="OrthoDB" id="9766614at2"/>
<dbReference type="Proteomes" id="UP000001566">
    <property type="component" value="Chromosome"/>
</dbReference>
<dbReference type="GO" id="GO:0005737">
    <property type="term" value="C:cytoplasm"/>
    <property type="evidence" value="ECO:0007669"/>
    <property type="project" value="UniProtKB-SubCell"/>
</dbReference>
<dbReference type="GO" id="GO:0005524">
    <property type="term" value="F:ATP binding"/>
    <property type="evidence" value="ECO:0007669"/>
    <property type="project" value="UniProtKB-UniRule"/>
</dbReference>
<dbReference type="GO" id="GO:0140662">
    <property type="term" value="F:ATP-dependent protein folding chaperone"/>
    <property type="evidence" value="ECO:0007669"/>
    <property type="project" value="InterPro"/>
</dbReference>
<dbReference type="GO" id="GO:0016853">
    <property type="term" value="F:isomerase activity"/>
    <property type="evidence" value="ECO:0007669"/>
    <property type="project" value="UniProtKB-KW"/>
</dbReference>
<dbReference type="GO" id="GO:0051082">
    <property type="term" value="F:unfolded protein binding"/>
    <property type="evidence" value="ECO:0007669"/>
    <property type="project" value="UniProtKB-UniRule"/>
</dbReference>
<dbReference type="GO" id="GO:0042026">
    <property type="term" value="P:protein refolding"/>
    <property type="evidence" value="ECO:0007669"/>
    <property type="project" value="UniProtKB-UniRule"/>
</dbReference>
<dbReference type="CDD" id="cd03344">
    <property type="entry name" value="GroEL"/>
    <property type="match status" value="1"/>
</dbReference>
<dbReference type="FunFam" id="3.50.7.10:FF:000001">
    <property type="entry name" value="60 kDa chaperonin"/>
    <property type="match status" value="1"/>
</dbReference>
<dbReference type="Gene3D" id="3.50.7.10">
    <property type="entry name" value="GroEL"/>
    <property type="match status" value="1"/>
</dbReference>
<dbReference type="Gene3D" id="1.10.560.10">
    <property type="entry name" value="GroEL-like equatorial domain"/>
    <property type="match status" value="1"/>
</dbReference>
<dbReference type="Gene3D" id="3.30.260.10">
    <property type="entry name" value="TCP-1-like chaperonin intermediate domain"/>
    <property type="match status" value="1"/>
</dbReference>
<dbReference type="HAMAP" id="MF_00600">
    <property type="entry name" value="CH60"/>
    <property type="match status" value="1"/>
</dbReference>
<dbReference type="InterPro" id="IPR018370">
    <property type="entry name" value="Chaperonin_Cpn60_CS"/>
</dbReference>
<dbReference type="InterPro" id="IPR001844">
    <property type="entry name" value="Cpn60/GroEL"/>
</dbReference>
<dbReference type="InterPro" id="IPR002423">
    <property type="entry name" value="Cpn60/GroEL/TCP-1"/>
</dbReference>
<dbReference type="InterPro" id="IPR027409">
    <property type="entry name" value="GroEL-like_apical_dom_sf"/>
</dbReference>
<dbReference type="InterPro" id="IPR027413">
    <property type="entry name" value="GROEL-like_equatorial_sf"/>
</dbReference>
<dbReference type="InterPro" id="IPR027410">
    <property type="entry name" value="TCP-1-like_intermed_sf"/>
</dbReference>
<dbReference type="NCBIfam" id="TIGR02348">
    <property type="entry name" value="GroEL"/>
    <property type="match status" value="1"/>
</dbReference>
<dbReference type="NCBIfam" id="NF000592">
    <property type="entry name" value="PRK00013.1"/>
    <property type="match status" value="1"/>
</dbReference>
<dbReference type="NCBIfam" id="NF009487">
    <property type="entry name" value="PRK12849.1"/>
    <property type="match status" value="1"/>
</dbReference>
<dbReference type="NCBIfam" id="NF009488">
    <property type="entry name" value="PRK12850.1"/>
    <property type="match status" value="1"/>
</dbReference>
<dbReference type="NCBIfam" id="NF009489">
    <property type="entry name" value="PRK12851.1"/>
    <property type="match status" value="1"/>
</dbReference>
<dbReference type="PANTHER" id="PTHR45633">
    <property type="entry name" value="60 KDA HEAT SHOCK PROTEIN, MITOCHONDRIAL"/>
    <property type="match status" value="1"/>
</dbReference>
<dbReference type="Pfam" id="PF00118">
    <property type="entry name" value="Cpn60_TCP1"/>
    <property type="match status" value="1"/>
</dbReference>
<dbReference type="PRINTS" id="PR00298">
    <property type="entry name" value="CHAPERONIN60"/>
</dbReference>
<dbReference type="SUPFAM" id="SSF52029">
    <property type="entry name" value="GroEL apical domain-like"/>
    <property type="match status" value="1"/>
</dbReference>
<dbReference type="SUPFAM" id="SSF48592">
    <property type="entry name" value="GroEL equatorial domain-like"/>
    <property type="match status" value="2"/>
</dbReference>
<dbReference type="PROSITE" id="PS00296">
    <property type="entry name" value="CHAPERONINS_CPN60"/>
    <property type="match status" value="1"/>
</dbReference>
<proteinExistence type="inferred from homology"/>
<sequence>MAKRIIYNENARRALEKGIDILAESVAVTLGPKGRNVVLEKKFGAPQIINDGVTIAKEIELEDHIENTGVALIRQAASKTNDAAGDGTTTATVLAHAMVKAGLRNVAAGANAITLKKGIDKASDFLVAEIKDKANPISDSNAIAQVGTISAGNDEEVGRMIADAMDKVGKEGVISLEEGKSMTTELEVTEGMRFDKGYISPYFATDTERMEAVLDEPYILLTDKKIGLVQDLVPVLEQIARTGKPLLIIAEDIEKEALATLVVNRLRGVLNVAAVKAPGFGDRRKAMLEDMAVLTNGQLITEDAGLKLENAKIEMLGTARRVTINKDTTTIVAEGNEVAVQARCEQIKKQMDETESTYDKEKLQERLAKLAGGVAVVKVGAATETEMKDKKLRLEDAINATKAAVEEGIVPGGGTTLAHLAPALEQWAASTLSGEELIGANIVAAALTAPLMRIAENAGVNGAVVAENVKAKSFNEGYNAANGDYVDMLAAGIVDPAKVTRSGLQNAASIAGMVLTTECIVADLPEKKEAAPAGGGMGGGDFDY</sequence>
<comment type="function">
    <text evidence="1">Together with its co-chaperonin GroES, plays an essential role in assisting protein folding. The GroEL-GroES system forms a nano-cage that allows encapsulation of the non-native substrate proteins and provides a physical environment optimized to promote and accelerate protein folding.</text>
</comment>
<comment type="catalytic activity">
    <reaction evidence="1">
        <text>ATP + H2O + a folded polypeptide = ADP + phosphate + an unfolded polypeptide.</text>
        <dbReference type="EC" id="5.6.1.7"/>
    </reaction>
</comment>
<comment type="subunit">
    <text evidence="1">Forms a cylinder of 14 subunits composed of two heptameric rings stacked back-to-back. Interacts with the co-chaperonin GroES.</text>
</comment>
<comment type="subcellular location">
    <subcellularLocation>
        <location evidence="1">Cytoplasm</location>
    </subcellularLocation>
</comment>
<comment type="similarity">
    <text evidence="1">Belongs to the chaperonin (HSP60) family.</text>
</comment>
<accession>A5GNA9</accession>